<comment type="function">
    <text evidence="1">Together with the chaperonin GroEL, plays an essential role in assisting protein folding. The GroEL-GroES system forms a nano-cage that allows encapsulation of the non-native substrate proteins and provides a physical environment optimized to promote and accelerate protein folding. GroES binds to the apical surface of the GroEL ring, thereby capping the opening of the GroEL channel.</text>
</comment>
<comment type="subunit">
    <text evidence="1">Heptamer of 7 subunits arranged in a ring. Interacts with the chaperonin GroEL.</text>
</comment>
<comment type="subcellular location">
    <subcellularLocation>
        <location evidence="1">Cytoplasm</location>
    </subcellularLocation>
</comment>
<comment type="similarity">
    <text evidence="1">Belongs to the GroES chaperonin family.</text>
</comment>
<name>CH10_BUCPP</name>
<feature type="chain" id="PRO_0000174717" description="Co-chaperonin GroES">
    <location>
        <begin position="1"/>
        <end position="97"/>
    </location>
</feature>
<accession>Q9F4F2</accession>
<reference key="1">
    <citation type="journal article" date="2000" name="Proc. Natl. Acad. Sci. U.S.A.">
        <title>Post-symbiotic plasmid acquisition and evolution of the repA1-replicon in Buchnera aphidicola.</title>
        <authorList>
            <person name="Van Ham R.C.H.J."/>
            <person name="Gonzalez-Candelas F."/>
            <person name="Silva F.J."/>
            <person name="Sabater B."/>
            <person name="Moya A."/>
            <person name="Latorre A."/>
        </authorList>
    </citation>
    <scope>NUCLEOTIDE SEQUENCE [GENOMIC DNA]</scope>
</reference>
<evidence type="ECO:0000255" key="1">
    <source>
        <dbReference type="HAMAP-Rule" id="MF_00580"/>
    </source>
</evidence>
<gene>
    <name evidence="1" type="primary">groES</name>
    <name evidence="1" type="synonym">groS</name>
</gene>
<proteinExistence type="inferred from homology"/>
<keyword id="KW-0143">Chaperone</keyword>
<keyword id="KW-0963">Cytoplasm</keyword>
<protein>
    <recommendedName>
        <fullName evidence="1">Co-chaperonin GroES</fullName>
    </recommendedName>
    <alternativeName>
        <fullName evidence="1">10 kDa chaperonin</fullName>
    </alternativeName>
    <alternativeName>
        <fullName evidence="1">Chaperonin-10</fullName>
        <shortName evidence="1">Cpn10</shortName>
    </alternativeName>
</protein>
<dbReference type="EMBL" id="AJ401306">
    <property type="protein sequence ID" value="CAC10475.1"/>
    <property type="molecule type" value="Genomic_DNA"/>
</dbReference>
<dbReference type="SMR" id="Q9F4F2"/>
<dbReference type="GO" id="GO:0005737">
    <property type="term" value="C:cytoplasm"/>
    <property type="evidence" value="ECO:0007669"/>
    <property type="project" value="UniProtKB-SubCell"/>
</dbReference>
<dbReference type="GO" id="GO:0005524">
    <property type="term" value="F:ATP binding"/>
    <property type="evidence" value="ECO:0007669"/>
    <property type="project" value="InterPro"/>
</dbReference>
<dbReference type="GO" id="GO:0046872">
    <property type="term" value="F:metal ion binding"/>
    <property type="evidence" value="ECO:0007669"/>
    <property type="project" value="TreeGrafter"/>
</dbReference>
<dbReference type="GO" id="GO:0044183">
    <property type="term" value="F:protein folding chaperone"/>
    <property type="evidence" value="ECO:0007669"/>
    <property type="project" value="InterPro"/>
</dbReference>
<dbReference type="GO" id="GO:0051087">
    <property type="term" value="F:protein-folding chaperone binding"/>
    <property type="evidence" value="ECO:0007669"/>
    <property type="project" value="TreeGrafter"/>
</dbReference>
<dbReference type="GO" id="GO:0051082">
    <property type="term" value="F:unfolded protein binding"/>
    <property type="evidence" value="ECO:0007669"/>
    <property type="project" value="TreeGrafter"/>
</dbReference>
<dbReference type="GO" id="GO:0051085">
    <property type="term" value="P:chaperone cofactor-dependent protein refolding"/>
    <property type="evidence" value="ECO:0007669"/>
    <property type="project" value="TreeGrafter"/>
</dbReference>
<dbReference type="CDD" id="cd00320">
    <property type="entry name" value="cpn10"/>
    <property type="match status" value="1"/>
</dbReference>
<dbReference type="FunFam" id="2.30.33.40:FF:000001">
    <property type="entry name" value="10 kDa chaperonin"/>
    <property type="match status" value="1"/>
</dbReference>
<dbReference type="Gene3D" id="2.30.33.40">
    <property type="entry name" value="GroES chaperonin"/>
    <property type="match status" value="1"/>
</dbReference>
<dbReference type="HAMAP" id="MF_00580">
    <property type="entry name" value="CH10"/>
    <property type="match status" value="1"/>
</dbReference>
<dbReference type="InterPro" id="IPR020818">
    <property type="entry name" value="Chaperonin_GroES"/>
</dbReference>
<dbReference type="InterPro" id="IPR037124">
    <property type="entry name" value="Chaperonin_GroES_sf"/>
</dbReference>
<dbReference type="InterPro" id="IPR018369">
    <property type="entry name" value="Chaprnonin_Cpn10_CS"/>
</dbReference>
<dbReference type="InterPro" id="IPR011032">
    <property type="entry name" value="GroES-like_sf"/>
</dbReference>
<dbReference type="NCBIfam" id="NF001526">
    <property type="entry name" value="PRK00364.1-1"/>
    <property type="match status" value="1"/>
</dbReference>
<dbReference type="NCBIfam" id="NF001527">
    <property type="entry name" value="PRK00364.1-2"/>
    <property type="match status" value="1"/>
</dbReference>
<dbReference type="NCBIfam" id="NF001531">
    <property type="entry name" value="PRK00364.2-2"/>
    <property type="match status" value="1"/>
</dbReference>
<dbReference type="PANTHER" id="PTHR10772">
    <property type="entry name" value="10 KDA HEAT SHOCK PROTEIN"/>
    <property type="match status" value="1"/>
</dbReference>
<dbReference type="PANTHER" id="PTHR10772:SF58">
    <property type="entry name" value="CO-CHAPERONIN GROES"/>
    <property type="match status" value="1"/>
</dbReference>
<dbReference type="Pfam" id="PF00166">
    <property type="entry name" value="Cpn10"/>
    <property type="match status" value="1"/>
</dbReference>
<dbReference type="PRINTS" id="PR00297">
    <property type="entry name" value="CHAPERONIN10"/>
</dbReference>
<dbReference type="SMART" id="SM00883">
    <property type="entry name" value="Cpn10"/>
    <property type="match status" value="1"/>
</dbReference>
<dbReference type="SUPFAM" id="SSF50129">
    <property type="entry name" value="GroES-like"/>
    <property type="match status" value="1"/>
</dbReference>
<dbReference type="PROSITE" id="PS00681">
    <property type="entry name" value="CHAPERONINS_CPN10"/>
    <property type="match status" value="1"/>
</dbReference>
<organism>
    <name type="scientific">Buchnera aphidicola subsp. Pterocomma populeum</name>
    <dbReference type="NCBI Taxonomy" id="98792"/>
    <lineage>
        <taxon>Bacteria</taxon>
        <taxon>Pseudomonadati</taxon>
        <taxon>Pseudomonadota</taxon>
        <taxon>Gammaproteobacteria</taxon>
        <taxon>Enterobacterales</taxon>
        <taxon>Erwiniaceae</taxon>
        <taxon>Buchnera</taxon>
    </lineage>
</organism>
<sequence>MNIRPLHDRVLVKRQEVELKSAGGIVLTGSAAGKSTRGTVVAVGKGRILDNGETKSLDVKIGDVVIFNEGYGAKTEKIDNEELLILTESDILAIVEE</sequence>